<dbReference type="EC" id="3.5.4.16" evidence="1"/>
<dbReference type="EMBL" id="CP001251">
    <property type="protein sequence ID" value="ACK41903.1"/>
    <property type="molecule type" value="Genomic_DNA"/>
</dbReference>
<dbReference type="RefSeq" id="YP_002352517.1">
    <property type="nucleotide sequence ID" value="NC_011661.1"/>
</dbReference>
<dbReference type="SMR" id="B8DZH0"/>
<dbReference type="FunCoup" id="B8DZH0">
    <property type="interactions" value="74"/>
</dbReference>
<dbReference type="STRING" id="515635.Dtur_0615"/>
<dbReference type="EnsemblBacteria" id="ACK41903">
    <property type="protein sequence ID" value="ACK41903"/>
    <property type="gene ID" value="Dtur_0615"/>
</dbReference>
<dbReference type="KEGG" id="dtu:Dtur_0615"/>
<dbReference type="PATRIC" id="fig|515635.4.peg.652"/>
<dbReference type="eggNOG" id="COG1469">
    <property type="taxonomic scope" value="Bacteria"/>
</dbReference>
<dbReference type="HOGENOM" id="CLU_062816_1_1_0"/>
<dbReference type="InParanoid" id="B8DZH0"/>
<dbReference type="OrthoDB" id="9808041at2"/>
<dbReference type="UniPathway" id="UPA00848">
    <property type="reaction ID" value="UER00151"/>
</dbReference>
<dbReference type="Proteomes" id="UP000007719">
    <property type="component" value="Chromosome"/>
</dbReference>
<dbReference type="GO" id="GO:0003933">
    <property type="term" value="F:GTP cyclohydrolase activity"/>
    <property type="evidence" value="ECO:0000318"/>
    <property type="project" value="GO_Central"/>
</dbReference>
<dbReference type="GO" id="GO:0003934">
    <property type="term" value="F:GTP cyclohydrolase I activity"/>
    <property type="evidence" value="ECO:0007669"/>
    <property type="project" value="UniProtKB-UniRule"/>
</dbReference>
<dbReference type="GO" id="GO:0046654">
    <property type="term" value="P:tetrahydrofolate biosynthetic process"/>
    <property type="evidence" value="ECO:0007669"/>
    <property type="project" value="UniProtKB-UniRule"/>
</dbReference>
<dbReference type="Gene3D" id="3.10.270.10">
    <property type="entry name" value="Urate Oxidase"/>
    <property type="match status" value="1"/>
</dbReference>
<dbReference type="HAMAP" id="MF_01527_B">
    <property type="entry name" value="GTP_cyclohydrol_B"/>
    <property type="match status" value="1"/>
</dbReference>
<dbReference type="InterPro" id="IPR022838">
    <property type="entry name" value="GTP_cyclohydrolase_FolE2"/>
</dbReference>
<dbReference type="InterPro" id="IPR003801">
    <property type="entry name" value="GTP_cyclohydrolase_FolE2/MptA"/>
</dbReference>
<dbReference type="NCBIfam" id="NF010200">
    <property type="entry name" value="PRK13674.1-1"/>
    <property type="match status" value="1"/>
</dbReference>
<dbReference type="PANTHER" id="PTHR36445">
    <property type="entry name" value="GTP CYCLOHYDROLASE MPTA"/>
    <property type="match status" value="1"/>
</dbReference>
<dbReference type="PANTHER" id="PTHR36445:SF1">
    <property type="entry name" value="GTP CYCLOHYDROLASE MPTA"/>
    <property type="match status" value="1"/>
</dbReference>
<dbReference type="Pfam" id="PF02649">
    <property type="entry name" value="GCHY-1"/>
    <property type="match status" value="1"/>
</dbReference>
<evidence type="ECO:0000255" key="1">
    <source>
        <dbReference type="HAMAP-Rule" id="MF_01527"/>
    </source>
</evidence>
<comment type="function">
    <text evidence="1">Converts GTP to 7,8-dihydroneopterin triphosphate.</text>
</comment>
<comment type="catalytic activity">
    <reaction evidence="1">
        <text>GTP + H2O = 7,8-dihydroneopterin 3'-triphosphate + formate + H(+)</text>
        <dbReference type="Rhea" id="RHEA:17473"/>
        <dbReference type="ChEBI" id="CHEBI:15377"/>
        <dbReference type="ChEBI" id="CHEBI:15378"/>
        <dbReference type="ChEBI" id="CHEBI:15740"/>
        <dbReference type="ChEBI" id="CHEBI:37565"/>
        <dbReference type="ChEBI" id="CHEBI:58462"/>
        <dbReference type="EC" id="3.5.4.16"/>
    </reaction>
</comment>
<comment type="pathway">
    <text evidence="1">Cofactor biosynthesis; 7,8-dihydroneopterin triphosphate biosynthesis; 7,8-dihydroneopterin triphosphate from GTP: step 1/1.</text>
</comment>
<comment type="similarity">
    <text evidence="1">Belongs to the GTP cyclohydrolase IV family.</text>
</comment>
<name>GCH4_DICTD</name>
<proteinExistence type="inferred from homology"/>
<gene>
    <name evidence="1" type="primary">folE2</name>
    <name type="ordered locus">Dtur_0615</name>
</gene>
<keyword id="KW-0378">Hydrolase</keyword>
<keyword id="KW-1185">Reference proteome</keyword>
<organism>
    <name type="scientific">Dictyoglomus turgidum (strain DSM 6724 / Z-1310)</name>
    <dbReference type="NCBI Taxonomy" id="515635"/>
    <lineage>
        <taxon>Bacteria</taxon>
        <taxon>Pseudomonadati</taxon>
        <taxon>Dictyoglomota</taxon>
        <taxon>Dictyoglomia</taxon>
        <taxon>Dictyoglomales</taxon>
        <taxon>Dictyoglomaceae</taxon>
        <taxon>Dictyoglomus</taxon>
    </lineage>
</organism>
<feature type="chain" id="PRO_1000215389" description="GTP cyclohydrolase FolE2">
    <location>
        <begin position="1"/>
        <end position="257"/>
    </location>
</feature>
<feature type="site" description="May be catalytically important" evidence="1">
    <location>
        <position position="143"/>
    </location>
</feature>
<reference key="1">
    <citation type="journal article" date="2016" name="Front. Microbiol.">
        <title>The complete genome sequence of hyperthermophile Dictyoglomus turgidum DSM 6724 reveals a specialized carbohydrate fermentor.</title>
        <authorList>
            <person name="Brumm P.J."/>
            <person name="Gowda K."/>
            <person name="Robb F.T."/>
            <person name="Mead D.A."/>
        </authorList>
    </citation>
    <scope>NUCLEOTIDE SEQUENCE [LARGE SCALE GENOMIC DNA]</scope>
    <source>
        <strain>DSM 6724 / Z-1310</strain>
    </source>
</reference>
<accession>B8DZH0</accession>
<protein>
    <recommendedName>
        <fullName evidence="1">GTP cyclohydrolase FolE2</fullName>
        <ecNumber evidence="1">3.5.4.16</ecNumber>
    </recommendedName>
</protein>
<sequence>MKDVQNERDYRGIYLRKVGIKNIHWPIKIITKSGEYQSTVANIDISVDLREDLRGTHMSRFVEVLNGIDFLHPENLGKILQEVREKLKADSSHIKITFPYFIFKKTPVSQIASPNMIECVIEAELSKKLYMIIGVKVPIHTLCPCSKEISEYGAHNQRAIAEIYIKSKKLIWFEDLVEIAERSASAPIYSLLKRPDEKYITETAYNNPKFVEDVVRDIVSELEKEPKISWYRVEVTSFESIHNHNAFACVEKGWIKK</sequence>